<name>WDL3_ARATH</name>
<feature type="chain" id="PRO_0000435675" description="Protein WVD2-like 3">
    <location>
        <begin position="1"/>
        <end position="338"/>
    </location>
</feature>
<feature type="region of interest" description="Disordered" evidence="2">
    <location>
        <begin position="68"/>
        <end position="204"/>
    </location>
</feature>
<feature type="region of interest" description="Disordered" evidence="2">
    <location>
        <begin position="248"/>
        <end position="338"/>
    </location>
</feature>
<feature type="coiled-coil region" evidence="1">
    <location>
        <begin position="210"/>
        <end position="240"/>
    </location>
</feature>
<feature type="compositionally biased region" description="Basic and acidic residues" evidence="2">
    <location>
        <begin position="74"/>
        <end position="84"/>
    </location>
</feature>
<feature type="compositionally biased region" description="Polar residues" evidence="2">
    <location>
        <begin position="97"/>
        <end position="109"/>
    </location>
</feature>
<feature type="compositionally biased region" description="Polar residues" evidence="2">
    <location>
        <begin position="121"/>
        <end position="130"/>
    </location>
</feature>
<feature type="compositionally biased region" description="Polar residues" evidence="2">
    <location>
        <begin position="172"/>
        <end position="189"/>
    </location>
</feature>
<feature type="compositionally biased region" description="Basic and acidic residues" evidence="2">
    <location>
        <begin position="306"/>
        <end position="331"/>
    </location>
</feature>
<proteinExistence type="evidence at protein level"/>
<organism>
    <name type="scientific">Arabidopsis thaliana</name>
    <name type="common">Mouse-ear cress</name>
    <dbReference type="NCBI Taxonomy" id="3702"/>
    <lineage>
        <taxon>Eukaryota</taxon>
        <taxon>Viridiplantae</taxon>
        <taxon>Streptophyta</taxon>
        <taxon>Embryophyta</taxon>
        <taxon>Tracheophyta</taxon>
        <taxon>Spermatophyta</taxon>
        <taxon>Magnoliopsida</taxon>
        <taxon>eudicotyledons</taxon>
        <taxon>Gunneridae</taxon>
        <taxon>Pentapetalae</taxon>
        <taxon>rosids</taxon>
        <taxon>malvids</taxon>
        <taxon>Brassicales</taxon>
        <taxon>Brassicaceae</taxon>
        <taxon>Camelineae</taxon>
        <taxon>Arabidopsis</taxon>
    </lineage>
</organism>
<protein>
    <recommendedName>
        <fullName evidence="5">Protein WVD2-like 3</fullName>
    </recommendedName>
    <alternativeName>
        <fullName evidence="4">Protein WAVE-DAMPENED 2-LIKE3</fullName>
    </alternativeName>
</protein>
<keyword id="KW-0025">Alternative splicing</keyword>
<keyword id="KW-0175">Coiled coil</keyword>
<keyword id="KW-0963">Cytoplasm</keyword>
<keyword id="KW-0206">Cytoskeleton</keyword>
<keyword id="KW-0493">Microtubule</keyword>
<keyword id="KW-1185">Reference proteome</keyword>
<keyword id="KW-0832">Ubl conjugation</keyword>
<gene>
    <name evidence="4" type="primary">WDL3</name>
    <name evidence="7" type="ordered locus">At3g23090</name>
    <name evidence="8" type="ORF">MXC7.13</name>
</gene>
<accession>Q84WL6</accession>
<accession>Q9LS82</accession>
<sequence length="338" mass="37782">MDICMDKEPDGVVVYANGDSCNPNQENVSEPLLDSVSRDDANVHTELRYGEENIEVNEYDVKECTSEIPVGKPIGDDFESKDVTKSSLHAKHASKSGRGNNKTRNTVPQPFSLATEKRASSTRSFTSESLESAGLKKFPDGHSKVQSQATKVPRKPLQPKNKKLSDEEDSCSVASYATSGAKSAKSRTVVTAAPSFRSTERAEKRKEFYTKLEEKHQAMEAEKTQSEARNKEATEAALRQLRKSLRFKANPMPKFYHEGPPPKVELKKPLPTRAKSPKLGRRNPKEGNRAKGASRRHETRKTLVISKEDHDDETTRNADQINHKEMNRNLEPETAFAC</sequence>
<evidence type="ECO:0000255" key="1"/>
<evidence type="ECO:0000256" key="2">
    <source>
        <dbReference type="SAM" id="MobiDB-lite"/>
    </source>
</evidence>
<evidence type="ECO:0000269" key="3">
    <source>
    </source>
</evidence>
<evidence type="ECO:0000303" key="4">
    <source>
    </source>
</evidence>
<evidence type="ECO:0000305" key="5"/>
<evidence type="ECO:0000305" key="6">
    <source>
    </source>
</evidence>
<evidence type="ECO:0000312" key="7">
    <source>
        <dbReference type="Araport" id="AT3G23090"/>
    </source>
</evidence>
<evidence type="ECO:0000312" key="8">
    <source>
        <dbReference type="EMBL" id="BAB02101.1"/>
    </source>
</evidence>
<comment type="function">
    <text evidence="3">Microtubule-associated protein (MAP) that regulates the orientation of interphase cortical microtubules. Binds to, bundles and stabilizes microtubules. Required for the organization and stability of cortical microtubules in hypocotyls. Required for normal hypocotyl cell elongation. Acts as a negative regulator of hypocotyl cell elongation in the light.</text>
</comment>
<comment type="subcellular location">
    <subcellularLocation>
        <location evidence="3">Cytoplasm</location>
        <location evidence="3">Cytoskeleton</location>
    </subcellularLocation>
    <text evidence="3">Associates with cortical microtubules.</text>
</comment>
<comment type="alternative products">
    <event type="alternative splicing"/>
    <isoform>
        <id>Q84WL6-1</id>
        <name>1</name>
        <sequence type="displayed"/>
    </isoform>
    <text evidence="5">A number of isoforms are produced. According to EST sequences.</text>
</comment>
<comment type="tissue specificity">
    <text evidence="3">Expressed in roots, root hairs, cotyledons, hypocotyls, trichomes, flowers and siliques.</text>
</comment>
<comment type="induction">
    <text evidence="3">By light (at protein level). Down-regulated by dark (at protein level).</text>
</comment>
<comment type="PTM">
    <text evidence="3 6">Ubiquitinated (Probable). Proteasomal-dependent degradation in the dark (PubMed:23653471).</text>
</comment>
<comment type="similarity">
    <text evidence="5">Belongs to the TPX2 family.</text>
</comment>
<comment type="sequence caution" evidence="5">
    <conflict type="erroneous gene model prediction">
        <sequence resource="EMBL-CDS" id="BAB02101"/>
    </conflict>
</comment>
<dbReference type="EMBL" id="AB026655">
    <property type="protein sequence ID" value="BAB02101.1"/>
    <property type="status" value="ALT_SEQ"/>
    <property type="molecule type" value="Genomic_DNA"/>
</dbReference>
<dbReference type="EMBL" id="CP002686">
    <property type="protein sequence ID" value="AEE76715.1"/>
    <property type="molecule type" value="Genomic_DNA"/>
</dbReference>
<dbReference type="EMBL" id="BT003083">
    <property type="protein sequence ID" value="AAO23648.1"/>
    <property type="molecule type" value="mRNA"/>
</dbReference>
<dbReference type="EMBL" id="AK227638">
    <property type="protein sequence ID" value="BAE99628.1"/>
    <property type="molecule type" value="mRNA"/>
</dbReference>
<dbReference type="RefSeq" id="NP_001326991.1">
    <property type="nucleotide sequence ID" value="NM_001338615.1"/>
</dbReference>
<dbReference type="RefSeq" id="NP_188950.1">
    <molecule id="Q84WL6-1"/>
    <property type="nucleotide sequence ID" value="NM_113210.4"/>
</dbReference>
<dbReference type="SMR" id="Q84WL6"/>
<dbReference type="FunCoup" id="Q84WL6">
    <property type="interactions" value="23"/>
</dbReference>
<dbReference type="STRING" id="3702.Q84WL6"/>
<dbReference type="iPTMnet" id="Q84WL6"/>
<dbReference type="PaxDb" id="3702-AT3G23090.2"/>
<dbReference type="ProteomicsDB" id="242635">
    <molecule id="Q84WL6-1"/>
</dbReference>
<dbReference type="DNASU" id="821884"/>
<dbReference type="EnsemblPlants" id="AT3G23090.1">
    <molecule id="Q84WL6-1"/>
    <property type="protein sequence ID" value="AT3G23090.1"/>
    <property type="gene ID" value="AT3G23090"/>
</dbReference>
<dbReference type="GeneID" id="821884"/>
<dbReference type="Gramene" id="AT3G23090.1">
    <molecule id="Q84WL6-1"/>
    <property type="protein sequence ID" value="AT3G23090.1"/>
    <property type="gene ID" value="AT3G23090"/>
</dbReference>
<dbReference type="KEGG" id="ath:AT3G23090"/>
<dbReference type="Araport" id="AT3G23090"/>
<dbReference type="TAIR" id="AT3G23090">
    <property type="gene designation" value="WDL3"/>
</dbReference>
<dbReference type="eggNOG" id="ENOG502RERJ">
    <property type="taxonomic scope" value="Eukaryota"/>
</dbReference>
<dbReference type="InParanoid" id="Q84WL6"/>
<dbReference type="PRO" id="PR:Q84WL6"/>
<dbReference type="Proteomes" id="UP000006548">
    <property type="component" value="Chromosome 3"/>
</dbReference>
<dbReference type="ExpressionAtlas" id="Q84WL6">
    <property type="expression patterns" value="baseline and differential"/>
</dbReference>
<dbReference type="GO" id="GO:0055028">
    <property type="term" value="C:cortical microtubule"/>
    <property type="evidence" value="ECO:0000314"/>
    <property type="project" value="UniProtKB"/>
</dbReference>
<dbReference type="GO" id="GO:0008017">
    <property type="term" value="F:microtubule binding"/>
    <property type="evidence" value="ECO:0000314"/>
    <property type="project" value="TAIR"/>
</dbReference>
<dbReference type="GO" id="GO:0043622">
    <property type="term" value="P:cortical microtubule organization"/>
    <property type="evidence" value="ECO:0000315"/>
    <property type="project" value="UniProtKB"/>
</dbReference>
<dbReference type="GO" id="GO:0051511">
    <property type="term" value="P:negative regulation of unidimensional cell growth"/>
    <property type="evidence" value="ECO:0000315"/>
    <property type="project" value="TAIR"/>
</dbReference>
<dbReference type="GO" id="GO:0009826">
    <property type="term" value="P:unidimensional cell growth"/>
    <property type="evidence" value="ECO:0000315"/>
    <property type="project" value="UniProtKB"/>
</dbReference>
<dbReference type="InterPro" id="IPR027329">
    <property type="entry name" value="TPX2_C"/>
</dbReference>
<dbReference type="InterPro" id="IPR044806">
    <property type="entry name" value="WVD2/WDL1-4"/>
</dbReference>
<dbReference type="PANTHER" id="PTHR46372">
    <property type="entry name" value="PROTEIN WVD2-LIKE 3"/>
    <property type="match status" value="1"/>
</dbReference>
<dbReference type="PANTHER" id="PTHR46372:SF2">
    <property type="entry name" value="PROTEIN WVD2-LIKE 3"/>
    <property type="match status" value="1"/>
</dbReference>
<dbReference type="Pfam" id="PF06886">
    <property type="entry name" value="TPX2"/>
    <property type="match status" value="1"/>
</dbReference>
<reference key="1">
    <citation type="journal article" date="2000" name="DNA Res.">
        <title>Structural analysis of Arabidopsis thaliana chromosome 3. I. Sequence features of the regions of 4,504,864 bp covered by sixty P1 and TAC clones.</title>
        <authorList>
            <person name="Sato S."/>
            <person name="Nakamura Y."/>
            <person name="Kaneko T."/>
            <person name="Katoh T."/>
            <person name="Asamizu E."/>
            <person name="Tabata S."/>
        </authorList>
    </citation>
    <scope>NUCLEOTIDE SEQUENCE [LARGE SCALE GENOMIC DNA]</scope>
    <source>
        <strain>cv. Columbia</strain>
    </source>
</reference>
<reference key="2">
    <citation type="journal article" date="2017" name="Plant J.">
        <title>Araport11: a complete reannotation of the Arabidopsis thaliana reference genome.</title>
        <authorList>
            <person name="Cheng C.Y."/>
            <person name="Krishnakumar V."/>
            <person name="Chan A.P."/>
            <person name="Thibaud-Nissen F."/>
            <person name="Schobel S."/>
            <person name="Town C.D."/>
        </authorList>
    </citation>
    <scope>GENOME REANNOTATION</scope>
    <source>
        <strain>cv. Columbia</strain>
    </source>
</reference>
<reference key="3">
    <citation type="journal article" date="2003" name="Science">
        <title>Empirical analysis of transcriptional activity in the Arabidopsis genome.</title>
        <authorList>
            <person name="Yamada K."/>
            <person name="Lim J."/>
            <person name="Dale J.M."/>
            <person name="Chen H."/>
            <person name="Shinn P."/>
            <person name="Palm C.J."/>
            <person name="Southwick A.M."/>
            <person name="Wu H.C."/>
            <person name="Kim C.J."/>
            <person name="Nguyen M."/>
            <person name="Pham P.K."/>
            <person name="Cheuk R.F."/>
            <person name="Karlin-Newmann G."/>
            <person name="Liu S.X."/>
            <person name="Lam B."/>
            <person name="Sakano H."/>
            <person name="Wu T."/>
            <person name="Yu G."/>
            <person name="Miranda M."/>
            <person name="Quach H.L."/>
            <person name="Tripp M."/>
            <person name="Chang C.H."/>
            <person name="Lee J.M."/>
            <person name="Toriumi M.J."/>
            <person name="Chan M.M."/>
            <person name="Tang C.C."/>
            <person name="Onodera C.S."/>
            <person name="Deng J.M."/>
            <person name="Akiyama K."/>
            <person name="Ansari Y."/>
            <person name="Arakawa T."/>
            <person name="Banh J."/>
            <person name="Banno F."/>
            <person name="Bowser L."/>
            <person name="Brooks S.Y."/>
            <person name="Carninci P."/>
            <person name="Chao Q."/>
            <person name="Choy N."/>
            <person name="Enju A."/>
            <person name="Goldsmith A.D."/>
            <person name="Gurjal M."/>
            <person name="Hansen N.F."/>
            <person name="Hayashizaki Y."/>
            <person name="Johnson-Hopson C."/>
            <person name="Hsuan V.W."/>
            <person name="Iida K."/>
            <person name="Karnes M."/>
            <person name="Khan S."/>
            <person name="Koesema E."/>
            <person name="Ishida J."/>
            <person name="Jiang P.X."/>
            <person name="Jones T."/>
            <person name="Kawai J."/>
            <person name="Kamiya A."/>
            <person name="Meyers C."/>
            <person name="Nakajima M."/>
            <person name="Narusaka M."/>
            <person name="Seki M."/>
            <person name="Sakurai T."/>
            <person name="Satou M."/>
            <person name="Tamse R."/>
            <person name="Vaysberg M."/>
            <person name="Wallender E.K."/>
            <person name="Wong C."/>
            <person name="Yamamura Y."/>
            <person name="Yuan S."/>
            <person name="Shinozaki K."/>
            <person name="Davis R.W."/>
            <person name="Theologis A."/>
            <person name="Ecker J.R."/>
        </authorList>
    </citation>
    <scope>NUCLEOTIDE SEQUENCE [LARGE SCALE MRNA]</scope>
    <source>
        <strain>cv. Columbia</strain>
    </source>
</reference>
<reference key="4">
    <citation type="submission" date="2006-07" db="EMBL/GenBank/DDBJ databases">
        <title>Large-scale analysis oaf RIKEN Arabidopsis full-length (RAFL) cDNAs.</title>
        <authorList>
            <person name="Totoki Y."/>
            <person name="Seki M."/>
            <person name="Ishida J."/>
            <person name="Nakajima M."/>
            <person name="Enju A."/>
            <person name="Kamiya A."/>
            <person name="Narusaka M."/>
            <person name="Shin-i T."/>
            <person name="Nakagawa M."/>
            <person name="Sakamoto N."/>
            <person name="Oishi K."/>
            <person name="Kohara Y."/>
            <person name="Kobayashi M."/>
            <person name="Toyoda A."/>
            <person name="Sakaki Y."/>
            <person name="Sakurai T."/>
            <person name="Iida K."/>
            <person name="Akiyama K."/>
            <person name="Satou M."/>
            <person name="Toyoda T."/>
            <person name="Konagaya A."/>
            <person name="Carninci P."/>
            <person name="Kawai J."/>
            <person name="Hayashizaki Y."/>
            <person name="Shinozaki K."/>
        </authorList>
    </citation>
    <scope>NUCLEOTIDE SEQUENCE [LARGE SCALE MRNA]</scope>
    <source>
        <strain>cv. Columbia</strain>
    </source>
</reference>
<reference key="5">
    <citation type="journal article" date="2013" name="Plant Cell">
        <title>Light-regulated hypocotyl elongation involves proteasome-dependent degradation of the microtubule regulatory protein WDL3 in Arabidopsis.</title>
        <authorList>
            <person name="Liu X."/>
            <person name="Qin T."/>
            <person name="Ma Q."/>
            <person name="Sun J."/>
            <person name="Liu Z."/>
            <person name="Yuan M."/>
            <person name="Mao T."/>
        </authorList>
    </citation>
    <scope>FUNCTION</scope>
    <scope>SUBCELLULAR LOCATION</scope>
    <scope>TISSUE SPECIFICITY</scope>
    <scope>UBIQUITINATION</scope>
    <scope>INDUCTION</scope>
</reference>